<organism>
    <name type="scientific">Pseudomonas savastanoi pv. phaseolicola (strain 1448A / Race 6)</name>
    <name type="common">Pseudomonas syringae pv. phaseolicola (strain 1448A / Race 6)</name>
    <dbReference type="NCBI Taxonomy" id="264730"/>
    <lineage>
        <taxon>Bacteria</taxon>
        <taxon>Pseudomonadati</taxon>
        <taxon>Pseudomonadota</taxon>
        <taxon>Gammaproteobacteria</taxon>
        <taxon>Pseudomonadales</taxon>
        <taxon>Pseudomonadaceae</taxon>
        <taxon>Pseudomonas</taxon>
    </lineage>
</organism>
<keyword id="KW-0227">DNA damage</keyword>
<keyword id="KW-0233">DNA recombination</keyword>
<keyword id="KW-0234">DNA repair</keyword>
<keyword id="KW-0479">Metal-binding</keyword>
<keyword id="KW-0862">Zinc</keyword>
<keyword id="KW-0863">Zinc-finger</keyword>
<evidence type="ECO:0000255" key="1">
    <source>
        <dbReference type="HAMAP-Rule" id="MF_00017"/>
    </source>
</evidence>
<feature type="chain" id="PRO_1000001579" description="Recombination protein RecR">
    <location>
        <begin position="1"/>
        <end position="200"/>
    </location>
</feature>
<feature type="domain" description="Toprim" evidence="1">
    <location>
        <begin position="80"/>
        <end position="175"/>
    </location>
</feature>
<feature type="zinc finger region" description="C4-type" evidence="1">
    <location>
        <begin position="57"/>
        <end position="72"/>
    </location>
</feature>
<reference key="1">
    <citation type="journal article" date="2005" name="J. Bacteriol.">
        <title>Whole-genome sequence analysis of Pseudomonas syringae pv. phaseolicola 1448A reveals divergence among pathovars in genes involved in virulence and transposition.</title>
        <authorList>
            <person name="Joardar V."/>
            <person name="Lindeberg M."/>
            <person name="Jackson R.W."/>
            <person name="Selengut J."/>
            <person name="Dodson R."/>
            <person name="Brinkac L.M."/>
            <person name="Daugherty S.C."/>
            <person name="DeBoy R.T."/>
            <person name="Durkin A.S."/>
            <person name="Gwinn Giglio M."/>
            <person name="Madupu R."/>
            <person name="Nelson W.C."/>
            <person name="Rosovitz M.J."/>
            <person name="Sullivan S.A."/>
            <person name="Crabtree J."/>
            <person name="Creasy T."/>
            <person name="Davidsen T.M."/>
            <person name="Haft D.H."/>
            <person name="Zafar N."/>
            <person name="Zhou L."/>
            <person name="Halpin R."/>
            <person name="Holley T."/>
            <person name="Khouri H.M."/>
            <person name="Feldblyum T.V."/>
            <person name="White O."/>
            <person name="Fraser C.M."/>
            <person name="Chatterjee A.K."/>
            <person name="Cartinhour S."/>
            <person name="Schneider D."/>
            <person name="Mansfield J.W."/>
            <person name="Collmer A."/>
            <person name="Buell R."/>
        </authorList>
    </citation>
    <scope>NUCLEOTIDE SEQUENCE [LARGE SCALE GENOMIC DNA]</scope>
    <source>
        <strain>1448A / Race 6</strain>
    </source>
</reference>
<sequence length="200" mass="21498">MSFSPLIRQLIDAFRVLPGVGQKTAQRMALQLLERDRSGGSRLALALGQAMDGVGHCRSCRTLTEEELCPQCADPRRDDTLLCVVEGPTDVYAVEQTGYRGRYFVLKGHLSPLDGLGPEAIGIPQLMERISQQGTFTEVILATNPTVEGEATAHYIAQLLHEKGLVASRIAHGVPLGGELDLVDGGTLAHSFAGRKPIAL</sequence>
<comment type="function">
    <text evidence="1">May play a role in DNA repair. It seems to be involved in an RecBC-independent recombinational process of DNA repair. It may act with RecF and RecO.</text>
</comment>
<comment type="similarity">
    <text evidence="1">Belongs to the RecR family.</text>
</comment>
<protein>
    <recommendedName>
        <fullName evidence="1">Recombination protein RecR</fullName>
    </recommendedName>
</protein>
<name>RECR_PSE14</name>
<accession>Q48GK6</accession>
<proteinExistence type="inferred from homology"/>
<dbReference type="EMBL" id="CP000058">
    <property type="protein sequence ID" value="AAZ34605.1"/>
    <property type="molecule type" value="Genomic_DNA"/>
</dbReference>
<dbReference type="RefSeq" id="WP_002554228.1">
    <property type="nucleotide sequence ID" value="NC_005773.3"/>
</dbReference>
<dbReference type="SMR" id="Q48GK6"/>
<dbReference type="GeneID" id="69860356"/>
<dbReference type="KEGG" id="psp:PSPPH_3318"/>
<dbReference type="eggNOG" id="COG0353">
    <property type="taxonomic scope" value="Bacteria"/>
</dbReference>
<dbReference type="HOGENOM" id="CLU_060739_1_2_6"/>
<dbReference type="Proteomes" id="UP000000551">
    <property type="component" value="Chromosome"/>
</dbReference>
<dbReference type="GO" id="GO:0003677">
    <property type="term" value="F:DNA binding"/>
    <property type="evidence" value="ECO:0007669"/>
    <property type="project" value="UniProtKB-UniRule"/>
</dbReference>
<dbReference type="GO" id="GO:0008270">
    <property type="term" value="F:zinc ion binding"/>
    <property type="evidence" value="ECO:0007669"/>
    <property type="project" value="UniProtKB-KW"/>
</dbReference>
<dbReference type="GO" id="GO:0006310">
    <property type="term" value="P:DNA recombination"/>
    <property type="evidence" value="ECO:0007669"/>
    <property type="project" value="UniProtKB-UniRule"/>
</dbReference>
<dbReference type="GO" id="GO:0006281">
    <property type="term" value="P:DNA repair"/>
    <property type="evidence" value="ECO:0007669"/>
    <property type="project" value="UniProtKB-UniRule"/>
</dbReference>
<dbReference type="CDD" id="cd01025">
    <property type="entry name" value="TOPRIM_recR"/>
    <property type="match status" value="1"/>
</dbReference>
<dbReference type="Gene3D" id="3.40.1360.10">
    <property type="match status" value="1"/>
</dbReference>
<dbReference type="Gene3D" id="6.10.250.240">
    <property type="match status" value="1"/>
</dbReference>
<dbReference type="Gene3D" id="1.10.8.420">
    <property type="entry name" value="RecR Domain 1"/>
    <property type="match status" value="1"/>
</dbReference>
<dbReference type="HAMAP" id="MF_00017">
    <property type="entry name" value="RecR"/>
    <property type="match status" value="1"/>
</dbReference>
<dbReference type="InterPro" id="IPR000093">
    <property type="entry name" value="DNA_Rcmb_RecR"/>
</dbReference>
<dbReference type="InterPro" id="IPR023627">
    <property type="entry name" value="Rcmb_RecR"/>
</dbReference>
<dbReference type="InterPro" id="IPR015967">
    <property type="entry name" value="Rcmb_RecR_Znf"/>
</dbReference>
<dbReference type="InterPro" id="IPR006171">
    <property type="entry name" value="TOPRIM_dom"/>
</dbReference>
<dbReference type="InterPro" id="IPR034137">
    <property type="entry name" value="TOPRIM_RecR"/>
</dbReference>
<dbReference type="NCBIfam" id="TIGR00615">
    <property type="entry name" value="recR"/>
    <property type="match status" value="1"/>
</dbReference>
<dbReference type="PANTHER" id="PTHR30446">
    <property type="entry name" value="RECOMBINATION PROTEIN RECR"/>
    <property type="match status" value="1"/>
</dbReference>
<dbReference type="PANTHER" id="PTHR30446:SF0">
    <property type="entry name" value="RECOMBINATION PROTEIN RECR"/>
    <property type="match status" value="1"/>
</dbReference>
<dbReference type="Pfam" id="PF21175">
    <property type="entry name" value="RecR_C"/>
    <property type="match status" value="1"/>
</dbReference>
<dbReference type="Pfam" id="PF21176">
    <property type="entry name" value="RecR_HhH"/>
    <property type="match status" value="1"/>
</dbReference>
<dbReference type="Pfam" id="PF02132">
    <property type="entry name" value="RecR_ZnF"/>
    <property type="match status" value="1"/>
</dbReference>
<dbReference type="Pfam" id="PF13662">
    <property type="entry name" value="Toprim_4"/>
    <property type="match status" value="1"/>
</dbReference>
<dbReference type="SMART" id="SM00493">
    <property type="entry name" value="TOPRIM"/>
    <property type="match status" value="1"/>
</dbReference>
<dbReference type="SUPFAM" id="SSF111304">
    <property type="entry name" value="Recombination protein RecR"/>
    <property type="match status" value="1"/>
</dbReference>
<dbReference type="PROSITE" id="PS01300">
    <property type="entry name" value="RECR"/>
    <property type="match status" value="1"/>
</dbReference>
<dbReference type="PROSITE" id="PS50880">
    <property type="entry name" value="TOPRIM"/>
    <property type="match status" value="1"/>
</dbReference>
<gene>
    <name evidence="1" type="primary">recR</name>
    <name type="ordered locus">PSPPH_3318</name>
</gene>